<comment type="function">
    <text evidence="1">Involved in the binding of tRNA to the ribosomes.</text>
</comment>
<comment type="subunit">
    <text evidence="1">Part of the 30S ribosomal subunit.</text>
</comment>
<comment type="similarity">
    <text evidence="1">Belongs to the universal ribosomal protein uS10 family.</text>
</comment>
<reference key="1">
    <citation type="journal article" date="2005" name="BMC Genomics">
        <title>Bacterial genome adaptation to niches: divergence of the potential virulence genes in three Burkholderia species of different survival strategies.</title>
        <authorList>
            <person name="Kim H.S."/>
            <person name="Schell M.A."/>
            <person name="Yu Y."/>
            <person name="Ulrich R.L."/>
            <person name="Sarria S.H."/>
            <person name="Nierman W.C."/>
            <person name="DeShazer D."/>
        </authorList>
    </citation>
    <scope>NUCLEOTIDE SEQUENCE [LARGE SCALE GENOMIC DNA]</scope>
    <source>
        <strain>ATCC 700388 / DSM 13276 / CCUG 48851 / CIP 106301 / E264</strain>
    </source>
</reference>
<keyword id="KW-0687">Ribonucleoprotein</keyword>
<keyword id="KW-0689">Ribosomal protein</keyword>
<protein>
    <recommendedName>
        <fullName evidence="1">Small ribosomal subunit protein uS10</fullName>
    </recommendedName>
    <alternativeName>
        <fullName evidence="2">30S ribosomal protein S10</fullName>
    </alternativeName>
</protein>
<dbReference type="EMBL" id="CP000086">
    <property type="protein sequence ID" value="ABC36466.1"/>
    <property type="molecule type" value="Genomic_DNA"/>
</dbReference>
<dbReference type="RefSeq" id="WP_004199280.1">
    <property type="nucleotide sequence ID" value="NZ_CP008786.1"/>
</dbReference>
<dbReference type="SMR" id="Q2SU26"/>
<dbReference type="GeneID" id="98107161"/>
<dbReference type="KEGG" id="bte:BTH_I3069"/>
<dbReference type="HOGENOM" id="CLU_122625_1_3_4"/>
<dbReference type="Proteomes" id="UP000001930">
    <property type="component" value="Chromosome I"/>
</dbReference>
<dbReference type="GO" id="GO:1990904">
    <property type="term" value="C:ribonucleoprotein complex"/>
    <property type="evidence" value="ECO:0007669"/>
    <property type="project" value="UniProtKB-KW"/>
</dbReference>
<dbReference type="GO" id="GO:0005840">
    <property type="term" value="C:ribosome"/>
    <property type="evidence" value="ECO:0007669"/>
    <property type="project" value="UniProtKB-KW"/>
</dbReference>
<dbReference type="GO" id="GO:0003735">
    <property type="term" value="F:structural constituent of ribosome"/>
    <property type="evidence" value="ECO:0007669"/>
    <property type="project" value="InterPro"/>
</dbReference>
<dbReference type="GO" id="GO:0000049">
    <property type="term" value="F:tRNA binding"/>
    <property type="evidence" value="ECO:0007669"/>
    <property type="project" value="UniProtKB-UniRule"/>
</dbReference>
<dbReference type="GO" id="GO:0006412">
    <property type="term" value="P:translation"/>
    <property type="evidence" value="ECO:0007669"/>
    <property type="project" value="UniProtKB-UniRule"/>
</dbReference>
<dbReference type="FunFam" id="3.30.70.600:FF:000001">
    <property type="entry name" value="30S ribosomal protein S10"/>
    <property type="match status" value="1"/>
</dbReference>
<dbReference type="Gene3D" id="3.30.70.600">
    <property type="entry name" value="Ribosomal protein S10 domain"/>
    <property type="match status" value="1"/>
</dbReference>
<dbReference type="HAMAP" id="MF_00508">
    <property type="entry name" value="Ribosomal_uS10"/>
    <property type="match status" value="1"/>
</dbReference>
<dbReference type="InterPro" id="IPR001848">
    <property type="entry name" value="Ribosomal_uS10"/>
</dbReference>
<dbReference type="InterPro" id="IPR018268">
    <property type="entry name" value="Ribosomal_uS10_CS"/>
</dbReference>
<dbReference type="InterPro" id="IPR027486">
    <property type="entry name" value="Ribosomal_uS10_dom"/>
</dbReference>
<dbReference type="InterPro" id="IPR036838">
    <property type="entry name" value="Ribosomal_uS10_dom_sf"/>
</dbReference>
<dbReference type="NCBIfam" id="NF001861">
    <property type="entry name" value="PRK00596.1"/>
    <property type="match status" value="1"/>
</dbReference>
<dbReference type="NCBIfam" id="TIGR01049">
    <property type="entry name" value="rpsJ_bact"/>
    <property type="match status" value="1"/>
</dbReference>
<dbReference type="PANTHER" id="PTHR11700">
    <property type="entry name" value="30S RIBOSOMAL PROTEIN S10 FAMILY MEMBER"/>
    <property type="match status" value="1"/>
</dbReference>
<dbReference type="Pfam" id="PF00338">
    <property type="entry name" value="Ribosomal_S10"/>
    <property type="match status" value="1"/>
</dbReference>
<dbReference type="PRINTS" id="PR00971">
    <property type="entry name" value="RIBOSOMALS10"/>
</dbReference>
<dbReference type="SMART" id="SM01403">
    <property type="entry name" value="Ribosomal_S10"/>
    <property type="match status" value="1"/>
</dbReference>
<dbReference type="SUPFAM" id="SSF54999">
    <property type="entry name" value="Ribosomal protein S10"/>
    <property type="match status" value="1"/>
</dbReference>
<dbReference type="PROSITE" id="PS00361">
    <property type="entry name" value="RIBOSOMAL_S10"/>
    <property type="match status" value="1"/>
</dbReference>
<accession>Q2SU26</accession>
<feature type="chain" id="PRO_0000237027" description="Small ribosomal subunit protein uS10">
    <location>
        <begin position="1"/>
        <end position="103"/>
    </location>
</feature>
<proteinExistence type="inferred from homology"/>
<gene>
    <name evidence="1" type="primary">rpsJ</name>
    <name type="ordered locus">BTH_I3069</name>
</gene>
<name>RS10_BURTA</name>
<evidence type="ECO:0000255" key="1">
    <source>
        <dbReference type="HAMAP-Rule" id="MF_00508"/>
    </source>
</evidence>
<evidence type="ECO:0000305" key="2"/>
<organism>
    <name type="scientific">Burkholderia thailandensis (strain ATCC 700388 / DSM 13276 / CCUG 48851 / CIP 106301 / E264)</name>
    <dbReference type="NCBI Taxonomy" id="271848"/>
    <lineage>
        <taxon>Bacteria</taxon>
        <taxon>Pseudomonadati</taxon>
        <taxon>Pseudomonadota</taxon>
        <taxon>Betaproteobacteria</taxon>
        <taxon>Burkholderiales</taxon>
        <taxon>Burkholderiaceae</taxon>
        <taxon>Burkholderia</taxon>
        <taxon>pseudomallei group</taxon>
    </lineage>
</organism>
<sequence length="103" mass="11828">MQQQKIRIRLKAFDYRLIDQSAAEIVDTAKRTGAIVRGPVPLPTRIQRFDILRSPHVNKTSRDQLEIRTHQRLMDIVDPTDKTVDALMKLDLPAGVDVEIKLQ</sequence>